<comment type="catalytic activity">
    <reaction evidence="1">
        <text>(S)-malate + a quinone = a quinol + oxaloacetate</text>
        <dbReference type="Rhea" id="RHEA:46012"/>
        <dbReference type="ChEBI" id="CHEBI:15589"/>
        <dbReference type="ChEBI" id="CHEBI:16452"/>
        <dbReference type="ChEBI" id="CHEBI:24646"/>
        <dbReference type="ChEBI" id="CHEBI:132124"/>
        <dbReference type="EC" id="1.1.5.4"/>
    </reaction>
</comment>
<comment type="cofactor">
    <cofactor evidence="1">
        <name>FAD</name>
        <dbReference type="ChEBI" id="CHEBI:57692"/>
    </cofactor>
</comment>
<comment type="pathway">
    <text evidence="1">Carbohydrate metabolism; tricarboxylic acid cycle; oxaloacetate from (S)-malate (quinone route): step 1/1.</text>
</comment>
<comment type="similarity">
    <text evidence="1">Belongs to the MQO family.</text>
</comment>
<name>MQO_PROM9</name>
<proteinExistence type="inferred from homology"/>
<keyword id="KW-0274">FAD</keyword>
<keyword id="KW-0285">Flavoprotein</keyword>
<keyword id="KW-0560">Oxidoreductase</keyword>
<keyword id="KW-0816">Tricarboxylic acid cycle</keyword>
<reference key="1">
    <citation type="journal article" date="2006" name="Science">
        <title>Genomic islands and the ecology and evolution of Prochlorococcus.</title>
        <authorList>
            <person name="Coleman M.L."/>
            <person name="Sullivan M.B."/>
            <person name="Martiny A.C."/>
            <person name="Steglich C."/>
            <person name="Barry K."/>
            <person name="Delong E.F."/>
            <person name="Chisholm S.W."/>
        </authorList>
    </citation>
    <scope>NUCLEOTIDE SEQUENCE [LARGE SCALE GENOMIC DNA]</scope>
    <source>
        <strain>MIT 9312</strain>
    </source>
</reference>
<sequence>MTSSKNPTNDNSYFDAVLVGAGIMSSTLALLISEVLPDIKFLIIEKLKAPGSESTGAFNNAGTGHAANCELNYTPLDEKGNLKIDKALSINRSFERSMSLWASLYESGKIDIKKFLKFIPHISFVSGQDNISFLKKRFQKMTDNPEFIDMEFSTSFDEISSWAPLITKDRNPSTQIAATRIGRGTDINFEALTKEYLSLVSLNKNVEIRYKTELVDLKKIDKKQWELEISSEGRKTSIRTGYVFLGAGGKTINYLQKSKIPEAKSYGGFPVSGKWLICEKKDLTEKHNSKVYGKADIGSPPMSVPHLDTRWIDNKKLLLYGPFAGFTTKFLKQSSYFDLFSSIKKNNIFSMLDVGFKNNDLINYLISQSLKNHNSRVDNLKNMMPSANPSDWYLKNAGQRVQIIKKTEGGGSLKFGTEIVNSSDGSLSALLGASPGASTAVSIMVEVLEKSVLLLNDKHNLQKKINDLIYPELSDSENKSIYIKDIKKRNNSIFGFHP</sequence>
<dbReference type="EC" id="1.1.5.4" evidence="1"/>
<dbReference type="EMBL" id="CP000111">
    <property type="protein sequence ID" value="ABB49476.1"/>
    <property type="molecule type" value="Genomic_DNA"/>
</dbReference>
<dbReference type="RefSeq" id="WP_011375975.1">
    <property type="nucleotide sequence ID" value="NC_007577.1"/>
</dbReference>
<dbReference type="SMR" id="Q31CB9"/>
<dbReference type="STRING" id="74546.PMT9312_0415"/>
<dbReference type="KEGG" id="pmi:PMT9312_0415"/>
<dbReference type="eggNOG" id="COG0579">
    <property type="taxonomic scope" value="Bacteria"/>
</dbReference>
<dbReference type="HOGENOM" id="CLU_028151_0_0_3"/>
<dbReference type="OrthoDB" id="9763983at2"/>
<dbReference type="UniPathway" id="UPA00223">
    <property type="reaction ID" value="UER01008"/>
</dbReference>
<dbReference type="Proteomes" id="UP000002715">
    <property type="component" value="Chromosome"/>
</dbReference>
<dbReference type="GO" id="GO:0047545">
    <property type="term" value="F:2-hydroxyglutarate dehydrogenase activity"/>
    <property type="evidence" value="ECO:0007669"/>
    <property type="project" value="TreeGrafter"/>
</dbReference>
<dbReference type="GO" id="GO:0008924">
    <property type="term" value="F:L-malate dehydrogenase (quinone) activity"/>
    <property type="evidence" value="ECO:0007669"/>
    <property type="project" value="UniProtKB-UniRule"/>
</dbReference>
<dbReference type="GO" id="GO:0006099">
    <property type="term" value="P:tricarboxylic acid cycle"/>
    <property type="evidence" value="ECO:0007669"/>
    <property type="project" value="UniProtKB-UniRule"/>
</dbReference>
<dbReference type="HAMAP" id="MF_00212">
    <property type="entry name" value="MQO"/>
    <property type="match status" value="1"/>
</dbReference>
<dbReference type="InterPro" id="IPR036188">
    <property type="entry name" value="FAD/NAD-bd_sf"/>
</dbReference>
<dbReference type="InterPro" id="IPR006231">
    <property type="entry name" value="MQO"/>
</dbReference>
<dbReference type="NCBIfam" id="NF003606">
    <property type="entry name" value="PRK05257.2-1"/>
    <property type="match status" value="1"/>
</dbReference>
<dbReference type="NCBIfam" id="NF003607">
    <property type="entry name" value="PRK05257.2-3"/>
    <property type="match status" value="1"/>
</dbReference>
<dbReference type="NCBIfam" id="NF003611">
    <property type="entry name" value="PRK05257.3-2"/>
    <property type="match status" value="1"/>
</dbReference>
<dbReference type="PANTHER" id="PTHR43104">
    <property type="entry name" value="L-2-HYDROXYGLUTARATE DEHYDROGENASE, MITOCHONDRIAL"/>
    <property type="match status" value="1"/>
</dbReference>
<dbReference type="PANTHER" id="PTHR43104:SF2">
    <property type="entry name" value="L-2-HYDROXYGLUTARATE DEHYDROGENASE, MITOCHONDRIAL"/>
    <property type="match status" value="1"/>
</dbReference>
<dbReference type="Pfam" id="PF06039">
    <property type="entry name" value="Mqo"/>
    <property type="match status" value="1"/>
</dbReference>
<dbReference type="SUPFAM" id="SSF51905">
    <property type="entry name" value="FAD/NAD(P)-binding domain"/>
    <property type="match status" value="1"/>
</dbReference>
<evidence type="ECO:0000255" key="1">
    <source>
        <dbReference type="HAMAP-Rule" id="MF_00212"/>
    </source>
</evidence>
<feature type="chain" id="PRO_0000325508" description="Probable malate:quinone oxidoreductase">
    <location>
        <begin position="1"/>
        <end position="498"/>
    </location>
</feature>
<accession>Q31CB9</accession>
<gene>
    <name evidence="1" type="primary">mqo</name>
    <name type="ordered locus">PMT9312_0415</name>
</gene>
<protein>
    <recommendedName>
        <fullName evidence="1">Probable malate:quinone oxidoreductase</fullName>
        <ecNumber evidence="1">1.1.5.4</ecNumber>
    </recommendedName>
    <alternativeName>
        <fullName evidence="1">MQO</fullName>
    </alternativeName>
    <alternativeName>
        <fullName evidence="1">Malate dehydrogenase [quinone]</fullName>
    </alternativeName>
</protein>
<organism>
    <name type="scientific">Prochlorococcus marinus (strain MIT 9312)</name>
    <dbReference type="NCBI Taxonomy" id="74546"/>
    <lineage>
        <taxon>Bacteria</taxon>
        <taxon>Bacillati</taxon>
        <taxon>Cyanobacteriota</taxon>
        <taxon>Cyanophyceae</taxon>
        <taxon>Synechococcales</taxon>
        <taxon>Prochlorococcaceae</taxon>
        <taxon>Prochlorococcus</taxon>
    </lineage>
</organism>